<feature type="chain" id="PRO_0000171516" description="Small ribosomal subunit biogenesis GTPase RsgA">
    <location>
        <begin position="1"/>
        <end position="291"/>
    </location>
</feature>
<feature type="domain" description="CP-type G" evidence="2">
    <location>
        <begin position="63"/>
        <end position="221"/>
    </location>
</feature>
<feature type="binding site" evidence="1">
    <location>
        <begin position="112"/>
        <end position="115"/>
    </location>
    <ligand>
        <name>GTP</name>
        <dbReference type="ChEBI" id="CHEBI:37565"/>
    </ligand>
</feature>
<feature type="binding site" evidence="1">
    <location>
        <begin position="164"/>
        <end position="172"/>
    </location>
    <ligand>
        <name>GTP</name>
        <dbReference type="ChEBI" id="CHEBI:37565"/>
    </ligand>
</feature>
<feature type="binding site" evidence="1">
    <location>
        <position position="245"/>
    </location>
    <ligand>
        <name>Zn(2+)</name>
        <dbReference type="ChEBI" id="CHEBI:29105"/>
    </ligand>
</feature>
<feature type="binding site" evidence="1">
    <location>
        <position position="250"/>
    </location>
    <ligand>
        <name>Zn(2+)</name>
        <dbReference type="ChEBI" id="CHEBI:29105"/>
    </ligand>
</feature>
<feature type="binding site" evidence="1">
    <location>
        <position position="252"/>
    </location>
    <ligand>
        <name>Zn(2+)</name>
        <dbReference type="ChEBI" id="CHEBI:29105"/>
    </ligand>
</feature>
<feature type="binding site" evidence="1">
    <location>
        <position position="258"/>
    </location>
    <ligand>
        <name>Zn(2+)</name>
        <dbReference type="ChEBI" id="CHEBI:29105"/>
    </ligand>
</feature>
<organism>
    <name type="scientific">Staphylococcus aureus (strain MRSA252)</name>
    <dbReference type="NCBI Taxonomy" id="282458"/>
    <lineage>
        <taxon>Bacteria</taxon>
        <taxon>Bacillati</taxon>
        <taxon>Bacillota</taxon>
        <taxon>Bacilli</taxon>
        <taxon>Bacillales</taxon>
        <taxon>Staphylococcaceae</taxon>
        <taxon>Staphylococcus</taxon>
    </lineage>
</organism>
<proteinExistence type="inferred from homology"/>
<evidence type="ECO:0000255" key="1">
    <source>
        <dbReference type="HAMAP-Rule" id="MF_01820"/>
    </source>
</evidence>
<evidence type="ECO:0000255" key="2">
    <source>
        <dbReference type="PROSITE-ProRule" id="PRU01058"/>
    </source>
</evidence>
<keyword id="KW-0963">Cytoplasm</keyword>
<keyword id="KW-0342">GTP-binding</keyword>
<keyword id="KW-0378">Hydrolase</keyword>
<keyword id="KW-0479">Metal-binding</keyword>
<keyword id="KW-0547">Nucleotide-binding</keyword>
<keyword id="KW-0690">Ribosome biogenesis</keyword>
<keyword id="KW-0694">RNA-binding</keyword>
<keyword id="KW-0699">rRNA-binding</keyword>
<keyword id="KW-0862">Zinc</keyword>
<name>RSGA_STAAR</name>
<reference key="1">
    <citation type="journal article" date="2004" name="Proc. Natl. Acad. Sci. U.S.A.">
        <title>Complete genomes of two clinical Staphylococcus aureus strains: evidence for the rapid evolution of virulence and drug resistance.</title>
        <authorList>
            <person name="Holden M.T.G."/>
            <person name="Feil E.J."/>
            <person name="Lindsay J.A."/>
            <person name="Peacock S.J."/>
            <person name="Day N.P.J."/>
            <person name="Enright M.C."/>
            <person name="Foster T.J."/>
            <person name="Moore C.E."/>
            <person name="Hurst L."/>
            <person name="Atkin R."/>
            <person name="Barron A."/>
            <person name="Bason N."/>
            <person name="Bentley S.D."/>
            <person name="Chillingworth C."/>
            <person name="Chillingworth T."/>
            <person name="Churcher C."/>
            <person name="Clark L."/>
            <person name="Corton C."/>
            <person name="Cronin A."/>
            <person name="Doggett J."/>
            <person name="Dowd L."/>
            <person name="Feltwell T."/>
            <person name="Hance Z."/>
            <person name="Harris B."/>
            <person name="Hauser H."/>
            <person name="Holroyd S."/>
            <person name="Jagels K."/>
            <person name="James K.D."/>
            <person name="Lennard N."/>
            <person name="Line A."/>
            <person name="Mayes R."/>
            <person name="Moule S."/>
            <person name="Mungall K."/>
            <person name="Ormond D."/>
            <person name="Quail M.A."/>
            <person name="Rabbinowitsch E."/>
            <person name="Rutherford K.M."/>
            <person name="Sanders M."/>
            <person name="Sharp S."/>
            <person name="Simmonds M."/>
            <person name="Stevens K."/>
            <person name="Whitehead S."/>
            <person name="Barrell B.G."/>
            <person name="Spratt B.G."/>
            <person name="Parkhill J."/>
        </authorList>
    </citation>
    <scope>NUCLEOTIDE SEQUENCE [LARGE SCALE GENOMIC DNA]</scope>
    <source>
        <strain>MRSA252</strain>
    </source>
</reference>
<dbReference type="EC" id="3.6.1.-" evidence="1"/>
<dbReference type="EMBL" id="BX571856">
    <property type="protein sequence ID" value="CAG40199.1"/>
    <property type="molecule type" value="Genomic_DNA"/>
</dbReference>
<dbReference type="RefSeq" id="WP_000847923.1">
    <property type="nucleotide sequence ID" value="NC_002952.2"/>
</dbReference>
<dbReference type="SMR" id="Q6GHL4"/>
<dbReference type="KEGG" id="sar:SAR1197"/>
<dbReference type="HOGENOM" id="CLU_033617_2_1_9"/>
<dbReference type="Proteomes" id="UP000000596">
    <property type="component" value="Chromosome"/>
</dbReference>
<dbReference type="GO" id="GO:0005737">
    <property type="term" value="C:cytoplasm"/>
    <property type="evidence" value="ECO:0007669"/>
    <property type="project" value="UniProtKB-SubCell"/>
</dbReference>
<dbReference type="GO" id="GO:0005525">
    <property type="term" value="F:GTP binding"/>
    <property type="evidence" value="ECO:0007669"/>
    <property type="project" value="UniProtKB-UniRule"/>
</dbReference>
<dbReference type="GO" id="GO:0003924">
    <property type="term" value="F:GTPase activity"/>
    <property type="evidence" value="ECO:0007669"/>
    <property type="project" value="UniProtKB-UniRule"/>
</dbReference>
<dbReference type="GO" id="GO:0046872">
    <property type="term" value="F:metal ion binding"/>
    <property type="evidence" value="ECO:0007669"/>
    <property type="project" value="UniProtKB-KW"/>
</dbReference>
<dbReference type="GO" id="GO:0019843">
    <property type="term" value="F:rRNA binding"/>
    <property type="evidence" value="ECO:0007669"/>
    <property type="project" value="UniProtKB-KW"/>
</dbReference>
<dbReference type="GO" id="GO:0042274">
    <property type="term" value="P:ribosomal small subunit biogenesis"/>
    <property type="evidence" value="ECO:0007669"/>
    <property type="project" value="UniProtKB-UniRule"/>
</dbReference>
<dbReference type="CDD" id="cd04466">
    <property type="entry name" value="S1_YloQ_GTPase"/>
    <property type="match status" value="1"/>
</dbReference>
<dbReference type="CDD" id="cd01854">
    <property type="entry name" value="YjeQ_EngC"/>
    <property type="match status" value="1"/>
</dbReference>
<dbReference type="Gene3D" id="2.40.50.140">
    <property type="entry name" value="Nucleic acid-binding proteins"/>
    <property type="match status" value="1"/>
</dbReference>
<dbReference type="Gene3D" id="3.40.50.300">
    <property type="entry name" value="P-loop containing nucleotide triphosphate hydrolases"/>
    <property type="match status" value="1"/>
</dbReference>
<dbReference type="Gene3D" id="1.10.40.50">
    <property type="entry name" value="Probable gtpase engc, domain 3"/>
    <property type="match status" value="1"/>
</dbReference>
<dbReference type="HAMAP" id="MF_01820">
    <property type="entry name" value="GTPase_RsgA"/>
    <property type="match status" value="1"/>
</dbReference>
<dbReference type="InterPro" id="IPR030378">
    <property type="entry name" value="G_CP_dom"/>
</dbReference>
<dbReference type="InterPro" id="IPR012340">
    <property type="entry name" value="NA-bd_OB-fold"/>
</dbReference>
<dbReference type="InterPro" id="IPR027417">
    <property type="entry name" value="P-loop_NTPase"/>
</dbReference>
<dbReference type="InterPro" id="IPR004881">
    <property type="entry name" value="Ribosome_biogen_GTPase_RsgA"/>
</dbReference>
<dbReference type="InterPro" id="IPR010914">
    <property type="entry name" value="RsgA_GTPase_dom"/>
</dbReference>
<dbReference type="InterPro" id="IPR031944">
    <property type="entry name" value="RsgA_N"/>
</dbReference>
<dbReference type="NCBIfam" id="TIGR00157">
    <property type="entry name" value="ribosome small subunit-dependent GTPase A"/>
    <property type="match status" value="1"/>
</dbReference>
<dbReference type="PANTHER" id="PTHR32120">
    <property type="entry name" value="SMALL RIBOSOMAL SUBUNIT BIOGENESIS GTPASE RSGA"/>
    <property type="match status" value="1"/>
</dbReference>
<dbReference type="PANTHER" id="PTHR32120:SF11">
    <property type="entry name" value="SMALL RIBOSOMAL SUBUNIT BIOGENESIS GTPASE RSGA 1, MITOCHONDRIAL-RELATED"/>
    <property type="match status" value="1"/>
</dbReference>
<dbReference type="Pfam" id="PF03193">
    <property type="entry name" value="RsgA_GTPase"/>
    <property type="match status" value="1"/>
</dbReference>
<dbReference type="Pfam" id="PF16745">
    <property type="entry name" value="RsgA_N"/>
    <property type="match status" value="1"/>
</dbReference>
<dbReference type="SUPFAM" id="SSF50249">
    <property type="entry name" value="Nucleic acid-binding proteins"/>
    <property type="match status" value="1"/>
</dbReference>
<dbReference type="SUPFAM" id="SSF52540">
    <property type="entry name" value="P-loop containing nucleoside triphosphate hydrolases"/>
    <property type="match status" value="1"/>
</dbReference>
<dbReference type="PROSITE" id="PS50936">
    <property type="entry name" value="ENGC_GTPASE"/>
    <property type="match status" value="1"/>
</dbReference>
<dbReference type="PROSITE" id="PS51721">
    <property type="entry name" value="G_CP"/>
    <property type="match status" value="1"/>
</dbReference>
<gene>
    <name evidence="1" type="primary">rsgA</name>
    <name type="ordered locus">SAR1197</name>
</gene>
<comment type="function">
    <text evidence="1">One of several proteins that assist in the late maturation steps of the functional core of the 30S ribosomal subunit. Helps release RbfA from mature subunits. May play a role in the assembly of ribosomal proteins into the subunit. Circularly permuted GTPase that catalyzes slow GTP hydrolysis, GTPase activity is stimulated by the 30S ribosomal subunit.</text>
</comment>
<comment type="cofactor">
    <cofactor evidence="1">
        <name>Zn(2+)</name>
        <dbReference type="ChEBI" id="CHEBI:29105"/>
    </cofactor>
    <text evidence="1">Binds 1 zinc ion per subunit.</text>
</comment>
<comment type="subunit">
    <text evidence="1">Monomer. Associates with 30S ribosomal subunit, binds 16S rRNA.</text>
</comment>
<comment type="subcellular location">
    <subcellularLocation>
        <location evidence="1">Cytoplasm</location>
    </subcellularLocation>
</comment>
<comment type="similarity">
    <text evidence="1">Belongs to the TRAFAC class YlqF/YawG GTPase family. RsgA subfamily.</text>
</comment>
<protein>
    <recommendedName>
        <fullName evidence="1">Small ribosomal subunit biogenesis GTPase RsgA</fullName>
        <ecNumber evidence="1">3.6.1.-</ecNumber>
    </recommendedName>
</protein>
<sequence length="291" mass="33881">MKTGRIVKSISGVYQVDVNGERFNTKPRGLFRKKKFSPVVGDIVEFDVQNINEGYIHQVYERKNELKRPPVSNIDTLVIVMSAVEPNFSTQLLDRFLVIAHSYQLNARILVTKKDKTPIEKQFEINELLKIYENIGYETEFIGNDDDRKKIVEAWSAGLIVLSGQSGVGKSTFLNHYRPELNLETNDISKSLNRGKHTTRHVELFERQNGYIADTPGFSALDFDHIDKDEIKDYFLELNRYGETCKFRNCNHIKEPNCNVKHQLEIGNIAQFRYDHYLQLFNEISNRKVRY</sequence>
<accession>Q6GHL4</accession>